<gene>
    <name evidence="1" type="primary">psbH</name>
</gene>
<geneLocation type="chloroplast"/>
<feature type="chain" id="PRO_0000275777" description="Photosystem II reaction center protein H">
    <location>
        <begin position="1"/>
        <end position="83"/>
    </location>
</feature>
<feature type="transmembrane region" description="Helical" evidence="1">
    <location>
        <begin position="45"/>
        <end position="65"/>
    </location>
</feature>
<feature type="region of interest" description="Disordered" evidence="2">
    <location>
        <begin position="1"/>
        <end position="21"/>
    </location>
</feature>
<feature type="compositionally biased region" description="Polar residues" evidence="2">
    <location>
        <begin position="1"/>
        <end position="11"/>
    </location>
</feature>
<feature type="modified residue" description="Phosphothreonine" evidence="3">
    <location>
        <position position="3"/>
    </location>
</feature>
<keyword id="KW-0150">Chloroplast</keyword>
<keyword id="KW-0472">Membrane</keyword>
<keyword id="KW-0597">Phosphoprotein</keyword>
<keyword id="KW-0602">Photosynthesis</keyword>
<keyword id="KW-0604">Photosystem II</keyword>
<keyword id="KW-0934">Plastid</keyword>
<keyword id="KW-0793">Thylakoid</keyword>
<keyword id="KW-0812">Transmembrane</keyword>
<keyword id="KW-1133">Transmembrane helix</keyword>
<accession>Q06SI9</accession>
<evidence type="ECO:0000255" key="1">
    <source>
        <dbReference type="HAMAP-Rule" id="MF_00752"/>
    </source>
</evidence>
<evidence type="ECO:0000256" key="2">
    <source>
        <dbReference type="SAM" id="MobiDB-lite"/>
    </source>
</evidence>
<evidence type="ECO:0000305" key="3"/>
<proteinExistence type="inferred from homology"/>
<comment type="function">
    <text evidence="1">One of the components of the core complex of photosystem II (PSII), required for its stability and/or assembly. PSII is a light-driven water:plastoquinone oxidoreductase that uses light energy to abstract electrons from H(2)O, generating O(2) and a proton gradient subsequently used for ATP formation. It consists of a core antenna complex that captures photons, and an electron transfer chain that converts photonic excitation into a charge separation.</text>
</comment>
<comment type="subunit">
    <text evidence="1">PSII is composed of 1 copy each of membrane proteins PsbA, PsbB, PsbC, PsbD, PsbE, PsbF, PsbH, PsbI, PsbJ, PsbK, PsbL, PsbM, PsbT, PsbX, PsbY, PsbZ, Psb30/Ycf12, at least 3 peripheral proteins of the oxygen-evolving complex and a large number of cofactors. It forms dimeric complexes.</text>
</comment>
<comment type="subcellular location">
    <subcellularLocation>
        <location evidence="1">Plastid</location>
        <location evidence="1">Chloroplast thylakoid membrane</location>
        <topology evidence="1">Single-pass membrane protein</topology>
    </subcellularLocation>
</comment>
<comment type="PTM">
    <text evidence="3">Phosphorylation is a light-dependent reaction catalyzed by a membrane-bound kinase; phosphorylation occurs on Thr residue(s) in the N-terminus of the protein.</text>
</comment>
<comment type="similarity">
    <text evidence="1">Belongs to the PsbH family.</text>
</comment>
<name>PSBH_STIHE</name>
<protein>
    <recommendedName>
        <fullName evidence="1">Photosystem II reaction center protein H</fullName>
        <shortName evidence="1">PSII-H</shortName>
    </recommendedName>
    <alternativeName>
        <fullName evidence="3">Photosystem II 10 kDa phosphoprotein</fullName>
    </alternativeName>
</protein>
<dbReference type="EMBL" id="DQ630521">
    <property type="protein sequence ID" value="ABF60172.1"/>
    <property type="molecule type" value="Genomic_DNA"/>
</dbReference>
<dbReference type="RefSeq" id="YP_764377.1">
    <property type="nucleotide sequence ID" value="NC_008372.1"/>
</dbReference>
<dbReference type="SMR" id="Q06SI9"/>
<dbReference type="GeneID" id="4308415"/>
<dbReference type="GO" id="GO:0009535">
    <property type="term" value="C:chloroplast thylakoid membrane"/>
    <property type="evidence" value="ECO:0007669"/>
    <property type="project" value="UniProtKB-SubCell"/>
</dbReference>
<dbReference type="GO" id="GO:0009523">
    <property type="term" value="C:photosystem II"/>
    <property type="evidence" value="ECO:0007669"/>
    <property type="project" value="UniProtKB-KW"/>
</dbReference>
<dbReference type="GO" id="GO:0042301">
    <property type="term" value="F:phosphate ion binding"/>
    <property type="evidence" value="ECO:0007669"/>
    <property type="project" value="InterPro"/>
</dbReference>
<dbReference type="GO" id="GO:0015979">
    <property type="term" value="P:photosynthesis"/>
    <property type="evidence" value="ECO:0007669"/>
    <property type="project" value="UniProtKB-UniRule"/>
</dbReference>
<dbReference type="GO" id="GO:0050821">
    <property type="term" value="P:protein stabilization"/>
    <property type="evidence" value="ECO:0007669"/>
    <property type="project" value="InterPro"/>
</dbReference>
<dbReference type="Gene3D" id="1.20.5.880">
    <property type="entry name" value="Photosystem II reaction center protein H"/>
    <property type="match status" value="1"/>
</dbReference>
<dbReference type="HAMAP" id="MF_00752">
    <property type="entry name" value="PSII_PsbH"/>
    <property type="match status" value="1"/>
</dbReference>
<dbReference type="InterPro" id="IPR001056">
    <property type="entry name" value="PSII_PsbH"/>
</dbReference>
<dbReference type="InterPro" id="IPR036863">
    <property type="entry name" value="PSII_PsbH_sf"/>
</dbReference>
<dbReference type="NCBIfam" id="NF002728">
    <property type="entry name" value="PRK02624.1"/>
    <property type="match status" value="1"/>
</dbReference>
<dbReference type="PANTHER" id="PTHR34469">
    <property type="entry name" value="PHOTOSYSTEM II REACTION CENTER PROTEIN H"/>
    <property type="match status" value="1"/>
</dbReference>
<dbReference type="PANTHER" id="PTHR34469:SF4">
    <property type="entry name" value="PHOTOSYSTEM II REACTION CENTER PROTEIN H"/>
    <property type="match status" value="1"/>
</dbReference>
<dbReference type="Pfam" id="PF00737">
    <property type="entry name" value="PsbH"/>
    <property type="match status" value="1"/>
</dbReference>
<dbReference type="SUPFAM" id="SSF161025">
    <property type="entry name" value="Photosystem II 10 kDa phosphoprotein PsbH"/>
    <property type="match status" value="1"/>
</dbReference>
<organism>
    <name type="scientific">Stigeoclonium helveticum</name>
    <name type="common">Green alga</name>
    <dbReference type="NCBI Taxonomy" id="55999"/>
    <lineage>
        <taxon>Eukaryota</taxon>
        <taxon>Viridiplantae</taxon>
        <taxon>Chlorophyta</taxon>
        <taxon>core chlorophytes</taxon>
        <taxon>Chlorophyceae</taxon>
        <taxon>OCC clade</taxon>
        <taxon>Chaetophorales</taxon>
        <taxon>Chaetophoraceae</taxon>
        <taxon>Stigeoclonium</taxon>
    </lineage>
</organism>
<sequence length="83" mass="8858">MATAKSNSSTPDIEFQPGISTPLGRLLKPLNSEAGKVLPGWGTTVLMGVFMALFAVFLVILLEIYNSSVILDGVTMSWESLGK</sequence>
<reference key="1">
    <citation type="journal article" date="2006" name="Mol. Genet. Genomics">
        <title>Distinctive architecture of the chloroplast genome in the chlorophycean green alga Stigeoclonium helveticum.</title>
        <authorList>
            <person name="Belanger A.-S."/>
            <person name="Brouard J.-S."/>
            <person name="Charlebois P."/>
            <person name="Otis C."/>
            <person name="Lemieux C."/>
            <person name="Turmel M."/>
        </authorList>
    </citation>
    <scope>NUCLEOTIDE SEQUENCE [LARGE SCALE GENOMIC DNA]</scope>
    <source>
        <strain>UTEX 441</strain>
    </source>
</reference>